<evidence type="ECO:0000255" key="1">
    <source>
        <dbReference type="HAMAP-Rule" id="MF_00600"/>
    </source>
</evidence>
<reference key="1">
    <citation type="journal article" date="2005" name="Infect. Immun.">
        <title>Whole-genome analyses of speciation events in pathogenic Brucellae.</title>
        <authorList>
            <person name="Chain P.S."/>
            <person name="Comerci D.J."/>
            <person name="Tolmasky M.E."/>
            <person name="Larimer F.W."/>
            <person name="Malfatti S.A."/>
            <person name="Vergez L.M."/>
            <person name="Aguero F."/>
            <person name="Land M.L."/>
            <person name="Ugalde R.A."/>
            <person name="Garcia E."/>
        </authorList>
    </citation>
    <scope>NUCLEOTIDE SEQUENCE [LARGE SCALE GENOMIC DNA]</scope>
    <source>
        <strain>2308</strain>
    </source>
</reference>
<protein>
    <recommendedName>
        <fullName evidence="1">Chaperonin GroEL</fullName>
        <ecNumber evidence="1">5.6.1.7</ecNumber>
    </recommendedName>
    <alternativeName>
        <fullName evidence="1">60 kDa chaperonin</fullName>
    </alternativeName>
    <alternativeName>
        <fullName evidence="1">Chaperonin-60</fullName>
        <shortName evidence="1">Cpn60</shortName>
    </alternativeName>
</protein>
<sequence>MAAKDVKFGRTAREKMLRGVDILADAVKVTLGPKGRNVVIEKSFGAPRITKDGVSVAKEVELEDKFENMGAQMLREVASKTNDTAGDGTTTATVLGQAIVQEGAKAVAAGMNPMDLKRGIDLAVNEVVAELLKKAKKINTSEEVAQVGTISANGEAEIGKMIAEAMQKVGNEGVITVEEAKTAETELEVVEGMQFDRGYLSPYFVTNPEKMVADLEDAYILLHEKKLSNLQALLPVLEAVVQTSKPLLIIAEDVEGEALATLVVNKLRGGLKIAAVKAPGFGDRRKAMLEDIAILTGGQVISEDLGIKLESVTLDMLGRAKKVSISKENTTIVDGAGQKAEIDARVGQIKQQIEETTSDYDREKLQERLAKLAGGVAVIRVGGATEVEVKEKKDRVDDALNATRAAVEEGIVAGGGTALLRASTKITAKGVNADQEAGINIVRRAIQAPARQITTNAGEEASVIVGKILENTSETFGYNTANGEYGDLISLGIVDPVKVVRTALQNAASVAGLLITTEAMIAELPKKDAAPAGMPGGMGGMGGMDF</sequence>
<dbReference type="EC" id="5.6.1.7" evidence="1"/>
<dbReference type="EMBL" id="AM040265">
    <property type="protein sequence ID" value="CAJ12355.1"/>
    <property type="molecule type" value="Genomic_DNA"/>
</dbReference>
<dbReference type="RefSeq" id="WP_002966387.1">
    <property type="nucleotide sequence ID" value="NZ_KN046823.1"/>
</dbReference>
<dbReference type="SMR" id="Q2YIJ3"/>
<dbReference type="STRING" id="359391.BAB2_0189"/>
<dbReference type="GeneID" id="93015849"/>
<dbReference type="KEGG" id="bmf:BAB2_0189"/>
<dbReference type="PATRIC" id="fig|359391.11.peg.2139"/>
<dbReference type="HOGENOM" id="CLU_016503_3_0_5"/>
<dbReference type="PhylomeDB" id="Q2YIJ3"/>
<dbReference type="Proteomes" id="UP000002719">
    <property type="component" value="Chromosome II"/>
</dbReference>
<dbReference type="GO" id="GO:0005737">
    <property type="term" value="C:cytoplasm"/>
    <property type="evidence" value="ECO:0007669"/>
    <property type="project" value="UniProtKB-SubCell"/>
</dbReference>
<dbReference type="GO" id="GO:0005524">
    <property type="term" value="F:ATP binding"/>
    <property type="evidence" value="ECO:0007669"/>
    <property type="project" value="UniProtKB-UniRule"/>
</dbReference>
<dbReference type="GO" id="GO:0140662">
    <property type="term" value="F:ATP-dependent protein folding chaperone"/>
    <property type="evidence" value="ECO:0007669"/>
    <property type="project" value="InterPro"/>
</dbReference>
<dbReference type="GO" id="GO:0016853">
    <property type="term" value="F:isomerase activity"/>
    <property type="evidence" value="ECO:0007669"/>
    <property type="project" value="UniProtKB-KW"/>
</dbReference>
<dbReference type="GO" id="GO:0051082">
    <property type="term" value="F:unfolded protein binding"/>
    <property type="evidence" value="ECO:0007669"/>
    <property type="project" value="UniProtKB-UniRule"/>
</dbReference>
<dbReference type="GO" id="GO:0042026">
    <property type="term" value="P:protein refolding"/>
    <property type="evidence" value="ECO:0007669"/>
    <property type="project" value="UniProtKB-UniRule"/>
</dbReference>
<dbReference type="CDD" id="cd03344">
    <property type="entry name" value="GroEL"/>
    <property type="match status" value="1"/>
</dbReference>
<dbReference type="FunFam" id="1.10.560.10:FF:000001">
    <property type="entry name" value="60 kDa chaperonin"/>
    <property type="match status" value="1"/>
</dbReference>
<dbReference type="FunFam" id="3.50.7.10:FF:000001">
    <property type="entry name" value="60 kDa chaperonin"/>
    <property type="match status" value="1"/>
</dbReference>
<dbReference type="Gene3D" id="3.50.7.10">
    <property type="entry name" value="GroEL"/>
    <property type="match status" value="1"/>
</dbReference>
<dbReference type="Gene3D" id="1.10.560.10">
    <property type="entry name" value="GroEL-like equatorial domain"/>
    <property type="match status" value="1"/>
</dbReference>
<dbReference type="Gene3D" id="3.30.260.10">
    <property type="entry name" value="TCP-1-like chaperonin intermediate domain"/>
    <property type="match status" value="1"/>
</dbReference>
<dbReference type="HAMAP" id="MF_00600">
    <property type="entry name" value="CH60"/>
    <property type="match status" value="1"/>
</dbReference>
<dbReference type="InterPro" id="IPR018370">
    <property type="entry name" value="Chaperonin_Cpn60_CS"/>
</dbReference>
<dbReference type="InterPro" id="IPR001844">
    <property type="entry name" value="Cpn60/GroEL"/>
</dbReference>
<dbReference type="InterPro" id="IPR002423">
    <property type="entry name" value="Cpn60/GroEL/TCP-1"/>
</dbReference>
<dbReference type="InterPro" id="IPR027409">
    <property type="entry name" value="GroEL-like_apical_dom_sf"/>
</dbReference>
<dbReference type="InterPro" id="IPR027413">
    <property type="entry name" value="GROEL-like_equatorial_sf"/>
</dbReference>
<dbReference type="InterPro" id="IPR027410">
    <property type="entry name" value="TCP-1-like_intermed_sf"/>
</dbReference>
<dbReference type="NCBIfam" id="TIGR02348">
    <property type="entry name" value="GroEL"/>
    <property type="match status" value="1"/>
</dbReference>
<dbReference type="NCBIfam" id="NF000592">
    <property type="entry name" value="PRK00013.1"/>
    <property type="match status" value="1"/>
</dbReference>
<dbReference type="NCBIfam" id="NF009487">
    <property type="entry name" value="PRK12849.1"/>
    <property type="match status" value="1"/>
</dbReference>
<dbReference type="NCBIfam" id="NF009488">
    <property type="entry name" value="PRK12850.1"/>
    <property type="match status" value="1"/>
</dbReference>
<dbReference type="NCBIfam" id="NF009489">
    <property type="entry name" value="PRK12851.1"/>
    <property type="match status" value="1"/>
</dbReference>
<dbReference type="PANTHER" id="PTHR45633">
    <property type="entry name" value="60 KDA HEAT SHOCK PROTEIN, MITOCHONDRIAL"/>
    <property type="match status" value="1"/>
</dbReference>
<dbReference type="Pfam" id="PF00118">
    <property type="entry name" value="Cpn60_TCP1"/>
    <property type="match status" value="1"/>
</dbReference>
<dbReference type="PRINTS" id="PR00298">
    <property type="entry name" value="CHAPERONIN60"/>
</dbReference>
<dbReference type="SUPFAM" id="SSF52029">
    <property type="entry name" value="GroEL apical domain-like"/>
    <property type="match status" value="1"/>
</dbReference>
<dbReference type="SUPFAM" id="SSF48592">
    <property type="entry name" value="GroEL equatorial domain-like"/>
    <property type="match status" value="1"/>
</dbReference>
<dbReference type="SUPFAM" id="SSF54849">
    <property type="entry name" value="GroEL-intermediate domain like"/>
    <property type="match status" value="1"/>
</dbReference>
<dbReference type="PROSITE" id="PS00296">
    <property type="entry name" value="CHAPERONINS_CPN60"/>
    <property type="match status" value="1"/>
</dbReference>
<accession>Q2YIJ3</accession>
<organism>
    <name type="scientific">Brucella abortus (strain 2308)</name>
    <dbReference type="NCBI Taxonomy" id="359391"/>
    <lineage>
        <taxon>Bacteria</taxon>
        <taxon>Pseudomonadati</taxon>
        <taxon>Pseudomonadota</taxon>
        <taxon>Alphaproteobacteria</taxon>
        <taxon>Hyphomicrobiales</taxon>
        <taxon>Brucellaceae</taxon>
        <taxon>Brucella/Ochrobactrum group</taxon>
        <taxon>Brucella</taxon>
    </lineage>
</organism>
<feature type="chain" id="PRO_0000256878" description="Chaperonin GroEL">
    <location>
        <begin position="1"/>
        <end position="546"/>
    </location>
</feature>
<feature type="binding site" evidence="1">
    <location>
        <begin position="30"/>
        <end position="33"/>
    </location>
    <ligand>
        <name>ATP</name>
        <dbReference type="ChEBI" id="CHEBI:30616"/>
    </ligand>
</feature>
<feature type="binding site" evidence="1">
    <location>
        <position position="51"/>
    </location>
    <ligand>
        <name>ATP</name>
        <dbReference type="ChEBI" id="CHEBI:30616"/>
    </ligand>
</feature>
<feature type="binding site" evidence="1">
    <location>
        <begin position="87"/>
        <end position="91"/>
    </location>
    <ligand>
        <name>ATP</name>
        <dbReference type="ChEBI" id="CHEBI:30616"/>
    </ligand>
</feature>
<feature type="binding site" evidence="1">
    <location>
        <position position="415"/>
    </location>
    <ligand>
        <name>ATP</name>
        <dbReference type="ChEBI" id="CHEBI:30616"/>
    </ligand>
</feature>
<feature type="binding site" evidence="1">
    <location>
        <position position="495"/>
    </location>
    <ligand>
        <name>ATP</name>
        <dbReference type="ChEBI" id="CHEBI:30616"/>
    </ligand>
</feature>
<comment type="function">
    <text evidence="1">Together with its co-chaperonin GroES, plays an essential role in assisting protein folding. The GroEL-GroES system forms a nano-cage that allows encapsulation of the non-native substrate proteins and provides a physical environment optimized to promote and accelerate protein folding.</text>
</comment>
<comment type="catalytic activity">
    <reaction evidence="1">
        <text>ATP + H2O + a folded polypeptide = ADP + phosphate + an unfolded polypeptide.</text>
        <dbReference type="EC" id="5.6.1.7"/>
    </reaction>
</comment>
<comment type="subunit">
    <text evidence="1">Forms a cylinder of 14 subunits composed of two heptameric rings stacked back-to-back. Interacts with the co-chaperonin GroES.</text>
</comment>
<comment type="subcellular location">
    <subcellularLocation>
        <location evidence="1">Cytoplasm</location>
    </subcellularLocation>
</comment>
<comment type="similarity">
    <text evidence="1">Belongs to the chaperonin (HSP60) family.</text>
</comment>
<keyword id="KW-0067">ATP-binding</keyword>
<keyword id="KW-0143">Chaperone</keyword>
<keyword id="KW-0963">Cytoplasm</keyword>
<keyword id="KW-0413">Isomerase</keyword>
<keyword id="KW-0547">Nucleotide-binding</keyword>
<keyword id="KW-1185">Reference proteome</keyword>
<name>CH60_BRUA2</name>
<gene>
    <name evidence="1" type="primary">groEL</name>
    <name evidence="1" type="synonym">groL</name>
    <name type="ordered locus">BAB2_0189</name>
</gene>
<proteinExistence type="inferred from homology"/>